<reference key="1">
    <citation type="journal article" date="2004" name="Nat. Genet.">
        <title>Complete sequencing and characterization of 21,243 full-length human cDNAs.</title>
        <authorList>
            <person name="Ota T."/>
            <person name="Suzuki Y."/>
            <person name="Nishikawa T."/>
            <person name="Otsuki T."/>
            <person name="Sugiyama T."/>
            <person name="Irie R."/>
            <person name="Wakamatsu A."/>
            <person name="Hayashi K."/>
            <person name="Sato H."/>
            <person name="Nagai K."/>
            <person name="Kimura K."/>
            <person name="Makita H."/>
            <person name="Sekine M."/>
            <person name="Obayashi M."/>
            <person name="Nishi T."/>
            <person name="Shibahara T."/>
            <person name="Tanaka T."/>
            <person name="Ishii S."/>
            <person name="Yamamoto J."/>
            <person name="Saito K."/>
            <person name="Kawai Y."/>
            <person name="Isono Y."/>
            <person name="Nakamura Y."/>
            <person name="Nagahari K."/>
            <person name="Murakami K."/>
            <person name="Yasuda T."/>
            <person name="Iwayanagi T."/>
            <person name="Wagatsuma M."/>
            <person name="Shiratori A."/>
            <person name="Sudo H."/>
            <person name="Hosoiri T."/>
            <person name="Kaku Y."/>
            <person name="Kodaira H."/>
            <person name="Kondo H."/>
            <person name="Sugawara M."/>
            <person name="Takahashi M."/>
            <person name="Kanda K."/>
            <person name="Yokoi T."/>
            <person name="Furuya T."/>
            <person name="Kikkawa E."/>
            <person name="Omura Y."/>
            <person name="Abe K."/>
            <person name="Kamihara K."/>
            <person name="Katsuta N."/>
            <person name="Sato K."/>
            <person name="Tanikawa M."/>
            <person name="Yamazaki M."/>
            <person name="Ninomiya K."/>
            <person name="Ishibashi T."/>
            <person name="Yamashita H."/>
            <person name="Murakawa K."/>
            <person name="Fujimori K."/>
            <person name="Tanai H."/>
            <person name="Kimata M."/>
            <person name="Watanabe M."/>
            <person name="Hiraoka S."/>
            <person name="Chiba Y."/>
            <person name="Ishida S."/>
            <person name="Ono Y."/>
            <person name="Takiguchi S."/>
            <person name="Watanabe S."/>
            <person name="Yosida M."/>
            <person name="Hotuta T."/>
            <person name="Kusano J."/>
            <person name="Kanehori K."/>
            <person name="Takahashi-Fujii A."/>
            <person name="Hara H."/>
            <person name="Tanase T.-O."/>
            <person name="Nomura Y."/>
            <person name="Togiya S."/>
            <person name="Komai F."/>
            <person name="Hara R."/>
            <person name="Takeuchi K."/>
            <person name="Arita M."/>
            <person name="Imose N."/>
            <person name="Musashino K."/>
            <person name="Yuuki H."/>
            <person name="Oshima A."/>
            <person name="Sasaki N."/>
            <person name="Aotsuka S."/>
            <person name="Yoshikawa Y."/>
            <person name="Matsunawa H."/>
            <person name="Ichihara T."/>
            <person name="Shiohata N."/>
            <person name="Sano S."/>
            <person name="Moriya S."/>
            <person name="Momiyama H."/>
            <person name="Satoh N."/>
            <person name="Takami S."/>
            <person name="Terashima Y."/>
            <person name="Suzuki O."/>
            <person name="Nakagawa S."/>
            <person name="Senoh A."/>
            <person name="Mizoguchi H."/>
            <person name="Goto Y."/>
            <person name="Shimizu F."/>
            <person name="Wakebe H."/>
            <person name="Hishigaki H."/>
            <person name="Watanabe T."/>
            <person name="Sugiyama A."/>
            <person name="Takemoto M."/>
            <person name="Kawakami B."/>
            <person name="Yamazaki M."/>
            <person name="Watanabe K."/>
            <person name="Kumagai A."/>
            <person name="Itakura S."/>
            <person name="Fukuzumi Y."/>
            <person name="Fujimori Y."/>
            <person name="Komiyama M."/>
            <person name="Tashiro H."/>
            <person name="Tanigami A."/>
            <person name="Fujiwara T."/>
            <person name="Ono T."/>
            <person name="Yamada K."/>
            <person name="Fujii Y."/>
            <person name="Ozaki K."/>
            <person name="Hirao M."/>
            <person name="Ohmori Y."/>
            <person name="Kawabata A."/>
            <person name="Hikiji T."/>
            <person name="Kobatake N."/>
            <person name="Inagaki H."/>
            <person name="Ikema Y."/>
            <person name="Okamoto S."/>
            <person name="Okitani R."/>
            <person name="Kawakami T."/>
            <person name="Noguchi S."/>
            <person name="Itoh T."/>
            <person name="Shigeta K."/>
            <person name="Senba T."/>
            <person name="Matsumura K."/>
            <person name="Nakajima Y."/>
            <person name="Mizuno T."/>
            <person name="Morinaga M."/>
            <person name="Sasaki M."/>
            <person name="Togashi T."/>
            <person name="Oyama M."/>
            <person name="Hata H."/>
            <person name="Watanabe M."/>
            <person name="Komatsu T."/>
            <person name="Mizushima-Sugano J."/>
            <person name="Satoh T."/>
            <person name="Shirai Y."/>
            <person name="Takahashi Y."/>
            <person name="Nakagawa K."/>
            <person name="Okumura K."/>
            <person name="Nagase T."/>
            <person name="Nomura N."/>
            <person name="Kikuchi H."/>
            <person name="Masuho Y."/>
            <person name="Yamashita R."/>
            <person name="Nakai K."/>
            <person name="Yada T."/>
            <person name="Nakamura Y."/>
            <person name="Ohara O."/>
            <person name="Isogai T."/>
            <person name="Sugano S."/>
        </authorList>
    </citation>
    <scope>NUCLEOTIDE SEQUENCE [LARGE SCALE MRNA]</scope>
    <source>
        <tissue>Cerebellum</tissue>
        <tissue>Testis</tissue>
    </source>
</reference>
<reference key="2">
    <citation type="journal article" date="2006" name="Nature">
        <title>The DNA sequence and biological annotation of human chromosome 1.</title>
        <authorList>
            <person name="Gregory S.G."/>
            <person name="Barlow K.F."/>
            <person name="McLay K.E."/>
            <person name="Kaul R."/>
            <person name="Swarbreck D."/>
            <person name="Dunham A."/>
            <person name="Scott C.E."/>
            <person name="Howe K.L."/>
            <person name="Woodfine K."/>
            <person name="Spencer C.C.A."/>
            <person name="Jones M.C."/>
            <person name="Gillson C."/>
            <person name="Searle S."/>
            <person name="Zhou Y."/>
            <person name="Kokocinski F."/>
            <person name="McDonald L."/>
            <person name="Evans R."/>
            <person name="Phillips K."/>
            <person name="Atkinson A."/>
            <person name="Cooper R."/>
            <person name="Jones C."/>
            <person name="Hall R.E."/>
            <person name="Andrews T.D."/>
            <person name="Lloyd C."/>
            <person name="Ainscough R."/>
            <person name="Almeida J.P."/>
            <person name="Ambrose K.D."/>
            <person name="Anderson F."/>
            <person name="Andrew R.W."/>
            <person name="Ashwell R.I.S."/>
            <person name="Aubin K."/>
            <person name="Babbage A.K."/>
            <person name="Bagguley C.L."/>
            <person name="Bailey J."/>
            <person name="Beasley H."/>
            <person name="Bethel G."/>
            <person name="Bird C.P."/>
            <person name="Bray-Allen S."/>
            <person name="Brown J.Y."/>
            <person name="Brown A.J."/>
            <person name="Buckley D."/>
            <person name="Burton J."/>
            <person name="Bye J."/>
            <person name="Carder C."/>
            <person name="Chapman J.C."/>
            <person name="Clark S.Y."/>
            <person name="Clarke G."/>
            <person name="Clee C."/>
            <person name="Cobley V."/>
            <person name="Collier R.E."/>
            <person name="Corby N."/>
            <person name="Coville G.J."/>
            <person name="Davies J."/>
            <person name="Deadman R."/>
            <person name="Dunn M."/>
            <person name="Earthrowl M."/>
            <person name="Ellington A.G."/>
            <person name="Errington H."/>
            <person name="Frankish A."/>
            <person name="Frankland J."/>
            <person name="French L."/>
            <person name="Garner P."/>
            <person name="Garnett J."/>
            <person name="Gay L."/>
            <person name="Ghori M.R.J."/>
            <person name="Gibson R."/>
            <person name="Gilby L.M."/>
            <person name="Gillett W."/>
            <person name="Glithero R.J."/>
            <person name="Grafham D.V."/>
            <person name="Griffiths C."/>
            <person name="Griffiths-Jones S."/>
            <person name="Grocock R."/>
            <person name="Hammond S."/>
            <person name="Harrison E.S.I."/>
            <person name="Hart E."/>
            <person name="Haugen E."/>
            <person name="Heath P.D."/>
            <person name="Holmes S."/>
            <person name="Holt K."/>
            <person name="Howden P.J."/>
            <person name="Hunt A.R."/>
            <person name="Hunt S.E."/>
            <person name="Hunter G."/>
            <person name="Isherwood J."/>
            <person name="James R."/>
            <person name="Johnson C."/>
            <person name="Johnson D."/>
            <person name="Joy A."/>
            <person name="Kay M."/>
            <person name="Kershaw J.K."/>
            <person name="Kibukawa M."/>
            <person name="Kimberley A.M."/>
            <person name="King A."/>
            <person name="Knights A.J."/>
            <person name="Lad H."/>
            <person name="Laird G."/>
            <person name="Lawlor S."/>
            <person name="Leongamornlert D.A."/>
            <person name="Lloyd D.M."/>
            <person name="Loveland J."/>
            <person name="Lovell J."/>
            <person name="Lush M.J."/>
            <person name="Lyne R."/>
            <person name="Martin S."/>
            <person name="Mashreghi-Mohammadi M."/>
            <person name="Matthews L."/>
            <person name="Matthews N.S.W."/>
            <person name="McLaren S."/>
            <person name="Milne S."/>
            <person name="Mistry S."/>
            <person name="Moore M.J.F."/>
            <person name="Nickerson T."/>
            <person name="O'Dell C.N."/>
            <person name="Oliver K."/>
            <person name="Palmeiri A."/>
            <person name="Palmer S.A."/>
            <person name="Parker A."/>
            <person name="Patel D."/>
            <person name="Pearce A.V."/>
            <person name="Peck A.I."/>
            <person name="Pelan S."/>
            <person name="Phelps K."/>
            <person name="Phillimore B.J."/>
            <person name="Plumb R."/>
            <person name="Rajan J."/>
            <person name="Raymond C."/>
            <person name="Rouse G."/>
            <person name="Saenphimmachak C."/>
            <person name="Sehra H.K."/>
            <person name="Sheridan E."/>
            <person name="Shownkeen R."/>
            <person name="Sims S."/>
            <person name="Skuce C.D."/>
            <person name="Smith M."/>
            <person name="Steward C."/>
            <person name="Subramanian S."/>
            <person name="Sycamore N."/>
            <person name="Tracey A."/>
            <person name="Tromans A."/>
            <person name="Van Helmond Z."/>
            <person name="Wall M."/>
            <person name="Wallis J.M."/>
            <person name="White S."/>
            <person name="Whitehead S.L."/>
            <person name="Wilkinson J.E."/>
            <person name="Willey D.L."/>
            <person name="Williams H."/>
            <person name="Wilming L."/>
            <person name="Wray P.W."/>
            <person name="Wu Z."/>
            <person name="Coulson A."/>
            <person name="Vaudin M."/>
            <person name="Sulston J.E."/>
            <person name="Durbin R.M."/>
            <person name="Hubbard T."/>
            <person name="Wooster R."/>
            <person name="Dunham I."/>
            <person name="Carter N.P."/>
            <person name="McVean G."/>
            <person name="Ross M.T."/>
            <person name="Harrow J."/>
            <person name="Olson M.V."/>
            <person name="Beck S."/>
            <person name="Rogers J."/>
            <person name="Bentley D.R."/>
        </authorList>
    </citation>
    <scope>NUCLEOTIDE SEQUENCE [LARGE SCALE GENOMIC DNA]</scope>
</reference>
<reference key="3">
    <citation type="journal article" date="2007" name="BMC Genomics">
        <title>The full-ORF clone resource of the German cDNA consortium.</title>
        <authorList>
            <person name="Bechtel S."/>
            <person name="Rosenfelder H."/>
            <person name="Duda A."/>
            <person name="Schmidt C.P."/>
            <person name="Ernst U."/>
            <person name="Wellenreuther R."/>
            <person name="Mehrle A."/>
            <person name="Schuster C."/>
            <person name="Bahr A."/>
            <person name="Bloecker H."/>
            <person name="Heubner D."/>
            <person name="Hoerlein A."/>
            <person name="Michel G."/>
            <person name="Wedler H."/>
            <person name="Koehrer K."/>
            <person name="Ottenwaelder B."/>
            <person name="Poustka A."/>
            <person name="Wiemann S."/>
            <person name="Schupp I."/>
        </authorList>
    </citation>
    <scope>NUCLEOTIDE SEQUENCE [LARGE SCALE MRNA] OF 343-496</scope>
    <source>
        <tissue>Amygdala</tissue>
    </source>
</reference>
<reference key="4">
    <citation type="journal article" date="2016" name="J. Biol. Chem.">
        <title>Substrate specificity of the HEMK2 protein glutamine methyltransferase and identification of novel substrates.</title>
        <authorList>
            <person name="Kusevic D."/>
            <person name="Kudithipudi S."/>
            <person name="Jeltsch A."/>
        </authorList>
    </citation>
    <scope>METHYLATION AT GLN-15</scope>
    <scope>MUTAGENESIS OF GLN-15</scope>
</reference>
<name>AN34A_HUMAN</name>
<feature type="chain" id="PRO_0000319100" description="Ankyrin repeat domain-containing protein 34A">
    <location>
        <begin position="1"/>
        <end position="496"/>
    </location>
</feature>
<feature type="repeat" description="ANK 1">
    <location>
        <begin position="4"/>
        <end position="33"/>
    </location>
</feature>
<feature type="repeat" description="ANK 2">
    <location>
        <begin position="37"/>
        <end position="72"/>
    </location>
</feature>
<feature type="repeat" description="ANK 3">
    <location>
        <begin position="76"/>
        <end position="106"/>
    </location>
</feature>
<feature type="repeat" description="ANK 4">
    <location>
        <begin position="110"/>
        <end position="139"/>
    </location>
</feature>
<feature type="region of interest" description="Disordered" evidence="2">
    <location>
        <begin position="147"/>
        <end position="473"/>
    </location>
</feature>
<feature type="compositionally biased region" description="Polar residues" evidence="2">
    <location>
        <begin position="147"/>
        <end position="162"/>
    </location>
</feature>
<feature type="compositionally biased region" description="Polar residues" evidence="2">
    <location>
        <begin position="180"/>
        <end position="191"/>
    </location>
</feature>
<feature type="compositionally biased region" description="Basic and acidic residues" evidence="2">
    <location>
        <begin position="204"/>
        <end position="214"/>
    </location>
</feature>
<feature type="compositionally biased region" description="Pro residues" evidence="2">
    <location>
        <begin position="218"/>
        <end position="233"/>
    </location>
</feature>
<feature type="compositionally biased region" description="Basic residues" evidence="2">
    <location>
        <begin position="234"/>
        <end position="243"/>
    </location>
</feature>
<feature type="compositionally biased region" description="Basic residues" evidence="2">
    <location>
        <begin position="463"/>
        <end position="473"/>
    </location>
</feature>
<feature type="modified residue" description="N5-methylglutamine" evidence="3">
    <location>
        <position position="15"/>
    </location>
</feature>
<feature type="modified residue" description="Phosphothreonine" evidence="1">
    <location>
        <position position="316"/>
    </location>
</feature>
<feature type="mutagenesis site" description="Abolishes methylation by N6AMT1." evidence="3">
    <original>Q</original>
    <variation>R</variation>
    <location>
        <position position="15"/>
    </location>
</feature>
<comment type="PTM">
    <text evidence="3">Methylated at Gln-15 by N6AMT1.</text>
</comment>
<comment type="similarity">
    <text evidence="4">Belongs to the ANKRD34 family.</text>
</comment>
<organism>
    <name type="scientific">Homo sapiens</name>
    <name type="common">Human</name>
    <dbReference type="NCBI Taxonomy" id="9606"/>
    <lineage>
        <taxon>Eukaryota</taxon>
        <taxon>Metazoa</taxon>
        <taxon>Chordata</taxon>
        <taxon>Craniata</taxon>
        <taxon>Vertebrata</taxon>
        <taxon>Euteleostomi</taxon>
        <taxon>Mammalia</taxon>
        <taxon>Eutheria</taxon>
        <taxon>Euarchontoglires</taxon>
        <taxon>Primates</taxon>
        <taxon>Haplorrhini</taxon>
        <taxon>Catarrhini</taxon>
        <taxon>Hominidae</taxon>
        <taxon>Homo</taxon>
    </lineage>
</organism>
<evidence type="ECO:0000250" key="1">
    <source>
        <dbReference type="UniProtKB" id="Q5BJT1"/>
    </source>
</evidence>
<evidence type="ECO:0000256" key="2">
    <source>
        <dbReference type="SAM" id="MobiDB-lite"/>
    </source>
</evidence>
<evidence type="ECO:0000269" key="3">
    <source>
    </source>
</evidence>
<evidence type="ECO:0000305" key="4"/>
<sequence length="496" mass="52636">MLHTEGHALLRAVGQGKLRLARLLLEGGAYVNEGDAQGETALMAACRARYDDPQNKARMVRYLLEQGADPNIADRLGRTALMHACAGGGGAAVASLLLAHGADPSVRDHAGASALVHALDRGDRETLATLLDACKAKGTEVIIITTDTSPSGTKKTRQYLNSPPSPGVEDPAPASPSPGFCTSPSEIQLQTAGGGGRGMLSPRAQEEEEKRDVFEFPLPKPPDDPSPSEPLPKPPRHPPKPLKRLNSEPWGLVAPPQPVPPTEGRPGIERLTAEFNGLTLTGRPRLSRRHSTEGPEDPPPWAEKVTSGGPLSRRNTAPEAQESGPPSGLRQKLSRMEPVELDTPGHLCPDSPESSRLSLERRRYSASPLTLPPAGSAPSPRQSQESLPGAVSPLSGRRRSPGLLERRGSGTLLLDHISQTRPGFLPPLNVSPHPPIPDIRPQPGGRAPSLPAPPYAGAPGSPRTKRKLVRRHSMQTEQIRLLGGFQSLGGPGEPGR</sequence>
<proteinExistence type="evidence at protein level"/>
<gene>
    <name type="primary">ANKRD34A</name>
    <name type="synonym">ANKRD34</name>
</gene>
<accession>Q69YU3</accession>
<accession>B3KSU3</accession>
<keyword id="KW-0040">ANK repeat</keyword>
<keyword id="KW-0488">Methylation</keyword>
<keyword id="KW-0597">Phosphoprotein</keyword>
<keyword id="KW-1267">Proteomics identification</keyword>
<keyword id="KW-1185">Reference proteome</keyword>
<keyword id="KW-0677">Repeat</keyword>
<protein>
    <recommendedName>
        <fullName>Ankyrin repeat domain-containing protein 34A</fullName>
    </recommendedName>
</protein>
<dbReference type="EMBL" id="AK094282">
    <property type="protein sequence ID" value="BAG52855.1"/>
    <property type="molecule type" value="mRNA"/>
</dbReference>
<dbReference type="EMBL" id="AK128050">
    <property type="protein sequence ID" value="BAG54622.1"/>
    <property type="molecule type" value="mRNA"/>
</dbReference>
<dbReference type="EMBL" id="AL160282">
    <property type="status" value="NOT_ANNOTATED_CDS"/>
    <property type="molecule type" value="Genomic_DNA"/>
</dbReference>
<dbReference type="EMBL" id="AL359622">
    <property type="protein sequence ID" value="CAH10676.1"/>
    <property type="molecule type" value="mRNA"/>
</dbReference>
<dbReference type="CCDS" id="CCDS72874.1"/>
<dbReference type="RefSeq" id="NP_001034977.1">
    <property type="nucleotide sequence ID" value="NM_001039888.4"/>
</dbReference>
<dbReference type="SMR" id="Q69YU3"/>
<dbReference type="BioGRID" id="129917">
    <property type="interactions" value="53"/>
</dbReference>
<dbReference type="FunCoup" id="Q69YU3">
    <property type="interactions" value="20"/>
</dbReference>
<dbReference type="IntAct" id="Q69YU3">
    <property type="interactions" value="5"/>
</dbReference>
<dbReference type="STRING" id="9606.ENSP00000475189"/>
<dbReference type="GlyGen" id="Q69YU3">
    <property type="glycosylation" value="1 site"/>
</dbReference>
<dbReference type="iPTMnet" id="Q69YU3"/>
<dbReference type="PhosphoSitePlus" id="Q69YU3"/>
<dbReference type="BioMuta" id="ANKRD34A"/>
<dbReference type="DMDM" id="172045718"/>
<dbReference type="jPOST" id="Q69YU3"/>
<dbReference type="MassIVE" id="Q69YU3"/>
<dbReference type="PaxDb" id="9606-ENSP00000475189"/>
<dbReference type="PeptideAtlas" id="Q69YU3"/>
<dbReference type="ProteomicsDB" id="66169"/>
<dbReference type="Antibodypedia" id="75647">
    <property type="antibodies" value="16 antibodies from 7 providers"/>
</dbReference>
<dbReference type="DNASU" id="284615"/>
<dbReference type="Ensembl" id="ENST00000606888.3">
    <property type="protein sequence ID" value="ENSP00000475189.1"/>
    <property type="gene ID" value="ENSG00000272031.3"/>
</dbReference>
<dbReference type="GeneID" id="284615"/>
<dbReference type="KEGG" id="hsa:284615"/>
<dbReference type="MANE-Select" id="ENST00000606888.3">
    <property type="protein sequence ID" value="ENSP00000475189.1"/>
    <property type="RefSeq nucleotide sequence ID" value="NM_001039888.4"/>
    <property type="RefSeq protein sequence ID" value="NP_001034977.1"/>
</dbReference>
<dbReference type="UCSC" id="uc021ouy.3">
    <property type="organism name" value="human"/>
</dbReference>
<dbReference type="AGR" id="HGNC:27639"/>
<dbReference type="CTD" id="284615"/>
<dbReference type="DisGeNET" id="284615"/>
<dbReference type="GeneCards" id="ANKRD34A"/>
<dbReference type="HGNC" id="HGNC:27639">
    <property type="gene designation" value="ANKRD34A"/>
</dbReference>
<dbReference type="HPA" id="ENSG00000272031">
    <property type="expression patterns" value="Tissue enhanced (brain)"/>
</dbReference>
<dbReference type="neXtProt" id="NX_Q69YU3"/>
<dbReference type="OpenTargets" id="ENSG00000272031"/>
<dbReference type="PharmGKB" id="PA162376563"/>
<dbReference type="VEuPathDB" id="HostDB:ENSG00000272031"/>
<dbReference type="eggNOG" id="ENOG502QT4A">
    <property type="taxonomic scope" value="Eukaryota"/>
</dbReference>
<dbReference type="GeneTree" id="ENSGT00390000012355"/>
<dbReference type="HOGENOM" id="CLU_042805_0_0_1"/>
<dbReference type="InParanoid" id="Q69YU3"/>
<dbReference type="OMA" id="PGNLCPD"/>
<dbReference type="OrthoDB" id="539213at2759"/>
<dbReference type="PAN-GO" id="Q69YU3">
    <property type="GO annotations" value="0 GO annotations based on evolutionary models"/>
</dbReference>
<dbReference type="PhylomeDB" id="Q69YU3"/>
<dbReference type="TreeFam" id="TF331155"/>
<dbReference type="PathwayCommons" id="Q69YU3"/>
<dbReference type="SignaLink" id="Q69YU3"/>
<dbReference type="BioGRID-ORCS" id="284615">
    <property type="hits" value="8 hits in 1137 CRISPR screens"/>
</dbReference>
<dbReference type="GenomeRNAi" id="284615"/>
<dbReference type="Pharos" id="Q69YU3">
    <property type="development level" value="Tdark"/>
</dbReference>
<dbReference type="PRO" id="PR:Q69YU3"/>
<dbReference type="Proteomes" id="UP000005640">
    <property type="component" value="Chromosome 1"/>
</dbReference>
<dbReference type="RNAct" id="Q69YU3">
    <property type="molecule type" value="protein"/>
</dbReference>
<dbReference type="Bgee" id="ENSG00000272031">
    <property type="expression patterns" value="Expressed in prefrontal cortex and 107 other cell types or tissues"/>
</dbReference>
<dbReference type="ExpressionAtlas" id="Q69YU3">
    <property type="expression patterns" value="baseline and differential"/>
</dbReference>
<dbReference type="GO" id="GO:0071546">
    <property type="term" value="C:pi-body"/>
    <property type="evidence" value="ECO:0000318"/>
    <property type="project" value="GO_Central"/>
</dbReference>
<dbReference type="Gene3D" id="1.25.40.20">
    <property type="entry name" value="Ankyrin repeat-containing domain"/>
    <property type="match status" value="1"/>
</dbReference>
<dbReference type="InterPro" id="IPR042637">
    <property type="entry name" value="AN34A/B/C"/>
</dbReference>
<dbReference type="InterPro" id="IPR002110">
    <property type="entry name" value="Ankyrin_rpt"/>
</dbReference>
<dbReference type="InterPro" id="IPR036770">
    <property type="entry name" value="Ankyrin_rpt-contain_sf"/>
</dbReference>
<dbReference type="PANTHER" id="PTHR24156">
    <property type="entry name" value="ANK_REP_REGION DOMAIN-CONTAINING PROTEIN"/>
    <property type="match status" value="1"/>
</dbReference>
<dbReference type="PANTHER" id="PTHR24156:SF4">
    <property type="entry name" value="ANKYRIN REPEAT DOMAIN 34A"/>
    <property type="match status" value="1"/>
</dbReference>
<dbReference type="Pfam" id="PF12796">
    <property type="entry name" value="Ank_2"/>
    <property type="match status" value="1"/>
</dbReference>
<dbReference type="SMART" id="SM00248">
    <property type="entry name" value="ANK"/>
    <property type="match status" value="4"/>
</dbReference>
<dbReference type="SUPFAM" id="SSF48403">
    <property type="entry name" value="Ankyrin repeat"/>
    <property type="match status" value="1"/>
</dbReference>
<dbReference type="PROSITE" id="PS50297">
    <property type="entry name" value="ANK_REP_REGION"/>
    <property type="match status" value="1"/>
</dbReference>
<dbReference type="PROSITE" id="PS50088">
    <property type="entry name" value="ANK_REPEAT"/>
    <property type="match status" value="2"/>
</dbReference>